<proteinExistence type="inferred from homology"/>
<accession>A9M3S9</accession>
<name>FABZ_NEIM0</name>
<gene>
    <name evidence="1" type="primary">fabZ</name>
    <name type="ordered locus">NMCC_1973</name>
</gene>
<organism>
    <name type="scientific">Neisseria meningitidis serogroup C (strain 053442)</name>
    <dbReference type="NCBI Taxonomy" id="374833"/>
    <lineage>
        <taxon>Bacteria</taxon>
        <taxon>Pseudomonadati</taxon>
        <taxon>Pseudomonadota</taxon>
        <taxon>Betaproteobacteria</taxon>
        <taxon>Neisseriales</taxon>
        <taxon>Neisseriaceae</taxon>
        <taxon>Neisseria</taxon>
    </lineage>
</organism>
<comment type="function">
    <text evidence="1">Involved in unsaturated fatty acids biosynthesis. Catalyzes the dehydration of short chain beta-hydroxyacyl-ACPs and long chain saturated and unsaturated beta-hydroxyacyl-ACPs.</text>
</comment>
<comment type="catalytic activity">
    <reaction evidence="1">
        <text>a (3R)-hydroxyacyl-[ACP] = a (2E)-enoyl-[ACP] + H2O</text>
        <dbReference type="Rhea" id="RHEA:13097"/>
        <dbReference type="Rhea" id="RHEA-COMP:9925"/>
        <dbReference type="Rhea" id="RHEA-COMP:9945"/>
        <dbReference type="ChEBI" id="CHEBI:15377"/>
        <dbReference type="ChEBI" id="CHEBI:78784"/>
        <dbReference type="ChEBI" id="CHEBI:78827"/>
        <dbReference type="EC" id="4.2.1.59"/>
    </reaction>
</comment>
<comment type="subcellular location">
    <subcellularLocation>
        <location evidence="1">Cytoplasm</location>
    </subcellularLocation>
</comment>
<comment type="similarity">
    <text evidence="1">Belongs to the thioester dehydratase family. FabZ subfamily.</text>
</comment>
<keyword id="KW-0963">Cytoplasm</keyword>
<keyword id="KW-0441">Lipid A biosynthesis</keyword>
<keyword id="KW-0444">Lipid biosynthesis</keyword>
<keyword id="KW-0443">Lipid metabolism</keyword>
<keyword id="KW-0456">Lyase</keyword>
<protein>
    <recommendedName>
        <fullName evidence="1">3-hydroxyacyl-[acyl-carrier-protein] dehydratase FabZ</fullName>
        <ecNumber evidence="1">4.2.1.59</ecNumber>
    </recommendedName>
    <alternativeName>
        <fullName evidence="1">(3R)-hydroxymyristoyl-[acyl-carrier-protein] dehydratase</fullName>
        <shortName evidence="1">(3R)-hydroxymyristoyl-ACP dehydrase</shortName>
    </alternativeName>
    <alternativeName>
        <fullName evidence="1">Beta-hydroxyacyl-ACP dehydratase</fullName>
    </alternativeName>
</protein>
<reference key="1">
    <citation type="journal article" date="2008" name="Genomics">
        <title>Characterization of ST-4821 complex, a unique Neisseria meningitidis clone.</title>
        <authorList>
            <person name="Peng J."/>
            <person name="Yang L."/>
            <person name="Yang F."/>
            <person name="Yang J."/>
            <person name="Yan Y."/>
            <person name="Nie H."/>
            <person name="Zhang X."/>
            <person name="Xiong Z."/>
            <person name="Jiang Y."/>
            <person name="Cheng F."/>
            <person name="Xu X."/>
            <person name="Chen S."/>
            <person name="Sun L."/>
            <person name="Li W."/>
            <person name="Shen Y."/>
            <person name="Shao Z."/>
            <person name="Liang X."/>
            <person name="Xu J."/>
            <person name="Jin Q."/>
        </authorList>
    </citation>
    <scope>NUCLEOTIDE SEQUENCE [LARGE SCALE GENOMIC DNA]</scope>
    <source>
        <strain>053442</strain>
    </source>
</reference>
<sequence>MDVQLPIEAKDIQKLIPHRYPFLQLDRITAFEPMKTLTAIKNVTINEPQFQGHFPDLPVMPGVLIIEAMAQACGTLAILSEGGRKENEFFFFAGIDEARFKRQVIPGDQLVFEVELLTSRRGIGKFNAVAKVDGQVAVEAVIMCAKRVV</sequence>
<feature type="chain" id="PRO_1000080441" description="3-hydroxyacyl-[acyl-carrier-protein] dehydratase FabZ">
    <location>
        <begin position="1"/>
        <end position="149"/>
    </location>
</feature>
<feature type="active site" evidence="1">
    <location>
        <position position="53"/>
    </location>
</feature>
<evidence type="ECO:0000255" key="1">
    <source>
        <dbReference type="HAMAP-Rule" id="MF_00406"/>
    </source>
</evidence>
<dbReference type="EC" id="4.2.1.59" evidence="1"/>
<dbReference type="EMBL" id="CP000381">
    <property type="protein sequence ID" value="ABX74097.1"/>
    <property type="molecule type" value="Genomic_DNA"/>
</dbReference>
<dbReference type="RefSeq" id="WP_002231544.1">
    <property type="nucleotide sequence ID" value="NC_010120.1"/>
</dbReference>
<dbReference type="SMR" id="A9M3S9"/>
<dbReference type="GeneID" id="93387257"/>
<dbReference type="KEGG" id="nmn:NMCC_1973"/>
<dbReference type="HOGENOM" id="CLU_078912_1_0_4"/>
<dbReference type="Proteomes" id="UP000001177">
    <property type="component" value="Chromosome"/>
</dbReference>
<dbReference type="GO" id="GO:0005737">
    <property type="term" value="C:cytoplasm"/>
    <property type="evidence" value="ECO:0007669"/>
    <property type="project" value="UniProtKB-SubCell"/>
</dbReference>
<dbReference type="GO" id="GO:0016020">
    <property type="term" value="C:membrane"/>
    <property type="evidence" value="ECO:0007669"/>
    <property type="project" value="GOC"/>
</dbReference>
<dbReference type="GO" id="GO:0019171">
    <property type="term" value="F:(3R)-hydroxyacyl-[acyl-carrier-protein] dehydratase activity"/>
    <property type="evidence" value="ECO:0007669"/>
    <property type="project" value="UniProtKB-EC"/>
</dbReference>
<dbReference type="GO" id="GO:0006633">
    <property type="term" value="P:fatty acid biosynthetic process"/>
    <property type="evidence" value="ECO:0007669"/>
    <property type="project" value="UniProtKB-UniRule"/>
</dbReference>
<dbReference type="GO" id="GO:0009245">
    <property type="term" value="P:lipid A biosynthetic process"/>
    <property type="evidence" value="ECO:0007669"/>
    <property type="project" value="UniProtKB-UniRule"/>
</dbReference>
<dbReference type="CDD" id="cd01288">
    <property type="entry name" value="FabZ"/>
    <property type="match status" value="1"/>
</dbReference>
<dbReference type="FunFam" id="3.10.129.10:FF:000001">
    <property type="entry name" value="3-hydroxyacyl-[acyl-carrier-protein] dehydratase FabZ"/>
    <property type="match status" value="1"/>
</dbReference>
<dbReference type="Gene3D" id="3.10.129.10">
    <property type="entry name" value="Hotdog Thioesterase"/>
    <property type="match status" value="1"/>
</dbReference>
<dbReference type="HAMAP" id="MF_00406">
    <property type="entry name" value="FabZ"/>
    <property type="match status" value="1"/>
</dbReference>
<dbReference type="InterPro" id="IPR013114">
    <property type="entry name" value="FabA_FabZ"/>
</dbReference>
<dbReference type="InterPro" id="IPR010084">
    <property type="entry name" value="FabZ"/>
</dbReference>
<dbReference type="InterPro" id="IPR029069">
    <property type="entry name" value="HotDog_dom_sf"/>
</dbReference>
<dbReference type="NCBIfam" id="TIGR01750">
    <property type="entry name" value="fabZ"/>
    <property type="match status" value="1"/>
</dbReference>
<dbReference type="NCBIfam" id="NF000582">
    <property type="entry name" value="PRK00006.1"/>
    <property type="match status" value="1"/>
</dbReference>
<dbReference type="PANTHER" id="PTHR30272">
    <property type="entry name" value="3-HYDROXYACYL-[ACYL-CARRIER-PROTEIN] DEHYDRATASE"/>
    <property type="match status" value="1"/>
</dbReference>
<dbReference type="PANTHER" id="PTHR30272:SF1">
    <property type="entry name" value="3-HYDROXYACYL-[ACYL-CARRIER-PROTEIN] DEHYDRATASE"/>
    <property type="match status" value="1"/>
</dbReference>
<dbReference type="Pfam" id="PF07977">
    <property type="entry name" value="FabA"/>
    <property type="match status" value="1"/>
</dbReference>
<dbReference type="SUPFAM" id="SSF54637">
    <property type="entry name" value="Thioesterase/thiol ester dehydrase-isomerase"/>
    <property type="match status" value="1"/>
</dbReference>